<name>RS13_BRADU</name>
<evidence type="ECO:0000255" key="1">
    <source>
        <dbReference type="HAMAP-Rule" id="MF_01315"/>
    </source>
</evidence>
<evidence type="ECO:0000256" key="2">
    <source>
        <dbReference type="SAM" id="MobiDB-lite"/>
    </source>
</evidence>
<evidence type="ECO:0000305" key="3"/>
<accession>Q89JA6</accession>
<keyword id="KW-1185">Reference proteome</keyword>
<keyword id="KW-0687">Ribonucleoprotein</keyword>
<keyword id="KW-0689">Ribosomal protein</keyword>
<keyword id="KW-0694">RNA-binding</keyword>
<keyword id="KW-0699">rRNA-binding</keyword>
<keyword id="KW-0820">tRNA-binding</keyword>
<protein>
    <recommendedName>
        <fullName evidence="1">Small ribosomal subunit protein uS13</fullName>
    </recommendedName>
    <alternativeName>
        <fullName evidence="3">30S ribosomal protein S13</fullName>
    </alternativeName>
</protein>
<dbReference type="EMBL" id="BA000040">
    <property type="protein sequence ID" value="BAC50643.1"/>
    <property type="molecule type" value="Genomic_DNA"/>
</dbReference>
<dbReference type="RefSeq" id="NP_772018.1">
    <property type="nucleotide sequence ID" value="NC_004463.1"/>
</dbReference>
<dbReference type="RefSeq" id="WP_011088133.1">
    <property type="nucleotide sequence ID" value="NC_004463.1"/>
</dbReference>
<dbReference type="SMR" id="Q89JA6"/>
<dbReference type="FunCoup" id="Q89JA6">
    <property type="interactions" value="818"/>
</dbReference>
<dbReference type="STRING" id="224911.AAV28_24300"/>
<dbReference type="EnsemblBacteria" id="BAC50643">
    <property type="protein sequence ID" value="BAC50643"/>
    <property type="gene ID" value="BAC50643"/>
</dbReference>
<dbReference type="GeneID" id="46492376"/>
<dbReference type="KEGG" id="bja:bll5378"/>
<dbReference type="PATRIC" id="fig|224911.44.peg.5277"/>
<dbReference type="eggNOG" id="COG0099">
    <property type="taxonomic scope" value="Bacteria"/>
</dbReference>
<dbReference type="HOGENOM" id="CLU_103849_1_2_5"/>
<dbReference type="InParanoid" id="Q89JA6"/>
<dbReference type="OrthoDB" id="9803610at2"/>
<dbReference type="PhylomeDB" id="Q89JA6"/>
<dbReference type="Proteomes" id="UP000002526">
    <property type="component" value="Chromosome"/>
</dbReference>
<dbReference type="GO" id="GO:0005829">
    <property type="term" value="C:cytosol"/>
    <property type="evidence" value="ECO:0000318"/>
    <property type="project" value="GO_Central"/>
</dbReference>
<dbReference type="GO" id="GO:0015935">
    <property type="term" value="C:small ribosomal subunit"/>
    <property type="evidence" value="ECO:0000318"/>
    <property type="project" value="GO_Central"/>
</dbReference>
<dbReference type="GO" id="GO:0019843">
    <property type="term" value="F:rRNA binding"/>
    <property type="evidence" value="ECO:0007669"/>
    <property type="project" value="UniProtKB-UniRule"/>
</dbReference>
<dbReference type="GO" id="GO:0003735">
    <property type="term" value="F:structural constituent of ribosome"/>
    <property type="evidence" value="ECO:0007669"/>
    <property type="project" value="InterPro"/>
</dbReference>
<dbReference type="GO" id="GO:0000049">
    <property type="term" value="F:tRNA binding"/>
    <property type="evidence" value="ECO:0007669"/>
    <property type="project" value="UniProtKB-UniRule"/>
</dbReference>
<dbReference type="GO" id="GO:0006412">
    <property type="term" value="P:translation"/>
    <property type="evidence" value="ECO:0007669"/>
    <property type="project" value="UniProtKB-UniRule"/>
</dbReference>
<dbReference type="FunFam" id="1.10.8.50:FF:000001">
    <property type="entry name" value="30S ribosomal protein S13"/>
    <property type="match status" value="1"/>
</dbReference>
<dbReference type="FunFam" id="4.10.910.10:FF:000001">
    <property type="entry name" value="30S ribosomal protein S13"/>
    <property type="match status" value="1"/>
</dbReference>
<dbReference type="Gene3D" id="1.10.8.50">
    <property type="match status" value="1"/>
</dbReference>
<dbReference type="Gene3D" id="4.10.910.10">
    <property type="entry name" value="30s ribosomal protein s13, domain 2"/>
    <property type="match status" value="1"/>
</dbReference>
<dbReference type="HAMAP" id="MF_01315">
    <property type="entry name" value="Ribosomal_uS13"/>
    <property type="match status" value="1"/>
</dbReference>
<dbReference type="InterPro" id="IPR027437">
    <property type="entry name" value="Rbsml_uS13_C"/>
</dbReference>
<dbReference type="InterPro" id="IPR001892">
    <property type="entry name" value="Ribosomal_uS13"/>
</dbReference>
<dbReference type="InterPro" id="IPR010979">
    <property type="entry name" value="Ribosomal_uS13-like_H2TH"/>
</dbReference>
<dbReference type="InterPro" id="IPR019980">
    <property type="entry name" value="Ribosomal_uS13_bac-type"/>
</dbReference>
<dbReference type="InterPro" id="IPR018269">
    <property type="entry name" value="Ribosomal_uS13_CS"/>
</dbReference>
<dbReference type="NCBIfam" id="TIGR03631">
    <property type="entry name" value="uS13_bact"/>
    <property type="match status" value="1"/>
</dbReference>
<dbReference type="PANTHER" id="PTHR10871">
    <property type="entry name" value="30S RIBOSOMAL PROTEIN S13/40S RIBOSOMAL PROTEIN S18"/>
    <property type="match status" value="1"/>
</dbReference>
<dbReference type="PANTHER" id="PTHR10871:SF1">
    <property type="entry name" value="SMALL RIBOSOMAL SUBUNIT PROTEIN US13M"/>
    <property type="match status" value="1"/>
</dbReference>
<dbReference type="Pfam" id="PF00416">
    <property type="entry name" value="Ribosomal_S13"/>
    <property type="match status" value="1"/>
</dbReference>
<dbReference type="PIRSF" id="PIRSF002134">
    <property type="entry name" value="Ribosomal_S13"/>
    <property type="match status" value="1"/>
</dbReference>
<dbReference type="SUPFAM" id="SSF46946">
    <property type="entry name" value="S13-like H2TH domain"/>
    <property type="match status" value="1"/>
</dbReference>
<dbReference type="PROSITE" id="PS00646">
    <property type="entry name" value="RIBOSOMAL_S13_1"/>
    <property type="match status" value="1"/>
</dbReference>
<dbReference type="PROSITE" id="PS50159">
    <property type="entry name" value="RIBOSOMAL_S13_2"/>
    <property type="match status" value="1"/>
</dbReference>
<gene>
    <name evidence="1" type="primary">rpsM</name>
    <name type="ordered locus">bll5378</name>
</gene>
<feature type="chain" id="PRO_0000132069" description="Small ribosomal subunit protein uS13">
    <location>
        <begin position="1"/>
        <end position="122"/>
    </location>
</feature>
<feature type="region of interest" description="Disordered" evidence="2">
    <location>
        <begin position="99"/>
        <end position="122"/>
    </location>
</feature>
<proteinExistence type="inferred from homology"/>
<sequence>MARIAGVNIPTNKRVLIALQYIHGIGQKIAGEILEKVKIPVDRRVSQLSDAEVLQIREVIDRDYLVEGDLRREVGINIKRLMDLGCYRGLRHRRGLPVRGQRTHTNARTRKGPAKAIAGKKK</sequence>
<comment type="function">
    <text evidence="1">Located at the top of the head of the 30S subunit, it contacts several helices of the 16S rRNA. In the 70S ribosome it contacts the 23S rRNA (bridge B1a) and protein L5 of the 50S subunit (bridge B1b), connecting the 2 subunits; these bridges are implicated in subunit movement. Contacts the tRNAs in the A and P-sites.</text>
</comment>
<comment type="subunit">
    <text evidence="1">Part of the 30S ribosomal subunit. Forms a loose heterodimer with protein S19. Forms two bridges to the 50S subunit in the 70S ribosome.</text>
</comment>
<comment type="similarity">
    <text evidence="1">Belongs to the universal ribosomal protein uS13 family.</text>
</comment>
<reference key="1">
    <citation type="journal article" date="2002" name="DNA Res.">
        <title>Complete genomic sequence of nitrogen-fixing symbiotic bacterium Bradyrhizobium japonicum USDA110.</title>
        <authorList>
            <person name="Kaneko T."/>
            <person name="Nakamura Y."/>
            <person name="Sato S."/>
            <person name="Minamisawa K."/>
            <person name="Uchiumi T."/>
            <person name="Sasamoto S."/>
            <person name="Watanabe A."/>
            <person name="Idesawa K."/>
            <person name="Iriguchi M."/>
            <person name="Kawashima K."/>
            <person name="Kohara M."/>
            <person name="Matsumoto M."/>
            <person name="Shimpo S."/>
            <person name="Tsuruoka H."/>
            <person name="Wada T."/>
            <person name="Yamada M."/>
            <person name="Tabata S."/>
        </authorList>
    </citation>
    <scope>NUCLEOTIDE SEQUENCE [LARGE SCALE GENOMIC DNA]</scope>
    <source>
        <strain>JCM 10833 / BCRC 13528 / IAM 13628 / NBRC 14792 / USDA 110</strain>
    </source>
</reference>
<organism>
    <name type="scientific">Bradyrhizobium diazoefficiens (strain JCM 10833 / BCRC 13528 / IAM 13628 / NBRC 14792 / USDA 110)</name>
    <dbReference type="NCBI Taxonomy" id="224911"/>
    <lineage>
        <taxon>Bacteria</taxon>
        <taxon>Pseudomonadati</taxon>
        <taxon>Pseudomonadota</taxon>
        <taxon>Alphaproteobacteria</taxon>
        <taxon>Hyphomicrobiales</taxon>
        <taxon>Nitrobacteraceae</taxon>
        <taxon>Bradyrhizobium</taxon>
    </lineage>
</organism>